<sequence>MTLDYPVPFHTPNLVWDYTIAIYLFLLGISSGAVQLAIAYKRSNKLENLSQNWIIRSGVILGSVPTLIGLTLLIFHLTRPWTFWKLMFNYQFNSVMSMGVMLFQIYMLFLVIWGVVIFKKEIEALINRFIPKLQFVMKLIGIAERIVSPVEVILFILAAVLGAYTGFLLSALISYPMLNNPVLPALFLASGTSSGIAATFLIILIAGKLKGDSHESHFIHKFEVPIMVTELGLIVCFFVGLHFGGGQKTVALHNALSGFWGVVFWVGVLIIGILIPLIANMFVNDRLKYNRNFIILVSIFDLIGVFCLRFFILYAGQLTVA</sequence>
<feature type="chain" id="PRO_0000159323" description="Protein NrfD homolog">
    <location>
        <begin position="1"/>
        <end position="321"/>
    </location>
</feature>
<feature type="transmembrane region" description="Helical" evidence="2">
    <location>
        <begin position="20"/>
        <end position="40"/>
    </location>
</feature>
<feature type="transmembrane region" description="Helical" evidence="2">
    <location>
        <begin position="58"/>
        <end position="78"/>
    </location>
</feature>
<feature type="transmembrane region" description="Helical" evidence="2">
    <location>
        <begin position="98"/>
        <end position="118"/>
    </location>
</feature>
<feature type="transmembrane region" description="Helical" evidence="2">
    <location>
        <begin position="153"/>
        <end position="173"/>
    </location>
</feature>
<feature type="transmembrane region" description="Helical" evidence="2">
    <location>
        <begin position="185"/>
        <end position="205"/>
    </location>
</feature>
<feature type="transmembrane region" description="Helical" evidence="2">
    <location>
        <begin position="224"/>
        <end position="244"/>
    </location>
</feature>
<feature type="transmembrane region" description="Helical" evidence="2">
    <location>
        <begin position="259"/>
        <end position="279"/>
    </location>
</feature>
<feature type="transmembrane region" description="Helical" evidence="2">
    <location>
        <begin position="293"/>
        <end position="313"/>
    </location>
</feature>
<name>NRFD_HAEIN</name>
<evidence type="ECO:0000250" key="1"/>
<evidence type="ECO:0000255" key="2"/>
<evidence type="ECO:0000305" key="3"/>
<gene>
    <name type="primary">nrfD</name>
    <name type="ordered locus">HI_1066</name>
</gene>
<protein>
    <recommendedName>
        <fullName>Protein NrfD homolog</fullName>
    </recommendedName>
</protein>
<comment type="function">
    <text evidence="1">Probably involved in the transfer of electrons from the quinone pool to the type-c cytochromes.</text>
</comment>
<comment type="subcellular location">
    <subcellularLocation>
        <location evidence="1">Cell inner membrane</location>
        <topology evidence="1">Multi-pass membrane protein</topology>
    </subcellularLocation>
</comment>
<comment type="similarity">
    <text evidence="3">Belongs to the NrfD family.</text>
</comment>
<reference key="1">
    <citation type="journal article" date="1995" name="Science">
        <title>Whole-genome random sequencing and assembly of Haemophilus influenzae Rd.</title>
        <authorList>
            <person name="Fleischmann R.D."/>
            <person name="Adams M.D."/>
            <person name="White O."/>
            <person name="Clayton R.A."/>
            <person name="Kirkness E.F."/>
            <person name="Kerlavage A.R."/>
            <person name="Bult C.J."/>
            <person name="Tomb J.-F."/>
            <person name="Dougherty B.A."/>
            <person name="Merrick J.M."/>
            <person name="McKenney K."/>
            <person name="Sutton G.G."/>
            <person name="FitzHugh W."/>
            <person name="Fields C.A."/>
            <person name="Gocayne J.D."/>
            <person name="Scott J.D."/>
            <person name="Shirley R."/>
            <person name="Liu L.-I."/>
            <person name="Glodek A."/>
            <person name="Kelley J.M."/>
            <person name="Weidman J.F."/>
            <person name="Phillips C.A."/>
            <person name="Spriggs T."/>
            <person name="Hedblom E."/>
            <person name="Cotton M.D."/>
            <person name="Utterback T.R."/>
            <person name="Hanna M.C."/>
            <person name="Nguyen D.T."/>
            <person name="Saudek D.M."/>
            <person name="Brandon R.C."/>
            <person name="Fine L.D."/>
            <person name="Fritchman J.L."/>
            <person name="Fuhrmann J.L."/>
            <person name="Geoghagen N.S.M."/>
            <person name="Gnehm C.L."/>
            <person name="McDonald L.A."/>
            <person name="Small K.V."/>
            <person name="Fraser C.M."/>
            <person name="Smith H.O."/>
            <person name="Venter J.C."/>
        </authorList>
    </citation>
    <scope>NUCLEOTIDE SEQUENCE [LARGE SCALE GENOMIC DNA]</scope>
    <source>
        <strain>ATCC 51907 / DSM 11121 / KW20 / Rd</strain>
    </source>
</reference>
<organism>
    <name type="scientific">Haemophilus influenzae (strain ATCC 51907 / DSM 11121 / KW20 / Rd)</name>
    <dbReference type="NCBI Taxonomy" id="71421"/>
    <lineage>
        <taxon>Bacteria</taxon>
        <taxon>Pseudomonadati</taxon>
        <taxon>Pseudomonadota</taxon>
        <taxon>Gammaproteobacteria</taxon>
        <taxon>Pasteurellales</taxon>
        <taxon>Pasteurellaceae</taxon>
        <taxon>Haemophilus</taxon>
    </lineage>
</organism>
<dbReference type="EMBL" id="L42023">
    <property type="protein sequence ID" value="AAC22724.1"/>
    <property type="molecule type" value="Genomic_DNA"/>
</dbReference>
<dbReference type="PIR" id="I64180">
    <property type="entry name" value="I64180"/>
</dbReference>
<dbReference type="RefSeq" id="NP_439224.1">
    <property type="nucleotide sequence ID" value="NC_000907.1"/>
</dbReference>
<dbReference type="SMR" id="P45014"/>
<dbReference type="STRING" id="71421.HI_1066"/>
<dbReference type="EnsemblBacteria" id="AAC22724">
    <property type="protein sequence ID" value="AAC22724"/>
    <property type="gene ID" value="HI_1066"/>
</dbReference>
<dbReference type="KEGG" id="hin:HI_1066"/>
<dbReference type="PATRIC" id="fig|71421.8.peg.1110"/>
<dbReference type="eggNOG" id="COG3301">
    <property type="taxonomic scope" value="Bacteria"/>
</dbReference>
<dbReference type="HOGENOM" id="CLU_045348_1_2_6"/>
<dbReference type="OrthoDB" id="31166at2"/>
<dbReference type="PhylomeDB" id="P45014"/>
<dbReference type="BioCyc" id="HINF71421:G1GJ1-1102-MONOMER"/>
<dbReference type="Proteomes" id="UP000000579">
    <property type="component" value="Chromosome"/>
</dbReference>
<dbReference type="GO" id="GO:0005886">
    <property type="term" value="C:plasma membrane"/>
    <property type="evidence" value="ECO:0000318"/>
    <property type="project" value="GO_Central"/>
</dbReference>
<dbReference type="FunFam" id="1.20.1630.10:FF:000001">
    <property type="entry name" value="Formate-dependent nitrite reductase subunit NrfD"/>
    <property type="match status" value="1"/>
</dbReference>
<dbReference type="Gene3D" id="1.20.1630.10">
    <property type="entry name" value="Formate dehydrogenase/DMSO reductase domain"/>
    <property type="match status" value="1"/>
</dbReference>
<dbReference type="InterPro" id="IPR052049">
    <property type="entry name" value="Electron_transfer_protein"/>
</dbReference>
<dbReference type="InterPro" id="IPR017566">
    <property type="entry name" value="NrfD"/>
</dbReference>
<dbReference type="InterPro" id="IPR005614">
    <property type="entry name" value="NrfD-like"/>
</dbReference>
<dbReference type="NCBIfam" id="TIGR03148">
    <property type="entry name" value="cyt_nit_nrfD"/>
    <property type="match status" value="1"/>
</dbReference>
<dbReference type="PANTHER" id="PTHR34856">
    <property type="entry name" value="PROTEIN NRFD"/>
    <property type="match status" value="1"/>
</dbReference>
<dbReference type="PANTHER" id="PTHR34856:SF2">
    <property type="entry name" value="PROTEIN NRFD"/>
    <property type="match status" value="1"/>
</dbReference>
<dbReference type="Pfam" id="PF03916">
    <property type="entry name" value="NrfD"/>
    <property type="match status" value="1"/>
</dbReference>
<accession>P45014</accession>
<keyword id="KW-0997">Cell inner membrane</keyword>
<keyword id="KW-1003">Cell membrane</keyword>
<keyword id="KW-0472">Membrane</keyword>
<keyword id="KW-1185">Reference proteome</keyword>
<keyword id="KW-0812">Transmembrane</keyword>
<keyword id="KW-1133">Transmembrane helix</keyword>
<proteinExistence type="inferred from homology"/>